<reference key="1">
    <citation type="journal article" date="2000" name="Eur. J. Biochem.">
        <title>Analysis of the domain structure and the DNA binding site of the transcriptional activator FhlA.</title>
        <authorList>
            <person name="Leonhartsberger S."/>
            <person name="Ehrenreich A."/>
            <person name="Bock A."/>
        </authorList>
    </citation>
    <scope>NUCLEOTIDE SEQUENCE [GENOMIC DNA]</scope>
    <scope>DNA-BINDING</scope>
    <source>
        <strain>TL 117</strain>
    </source>
</reference>
<reference key="2">
    <citation type="journal article" date="2001" name="Nature">
        <title>Complete genome sequence of Salmonella enterica serovar Typhimurium LT2.</title>
        <authorList>
            <person name="McClelland M."/>
            <person name="Sanderson K.E."/>
            <person name="Spieth J."/>
            <person name="Clifton S.W."/>
            <person name="Latreille P."/>
            <person name="Courtney L."/>
            <person name="Porwollik S."/>
            <person name="Ali J."/>
            <person name="Dante M."/>
            <person name="Du F."/>
            <person name="Hou S."/>
            <person name="Layman D."/>
            <person name="Leonard S."/>
            <person name="Nguyen C."/>
            <person name="Scott K."/>
            <person name="Holmes A."/>
            <person name="Grewal N."/>
            <person name="Mulvaney E."/>
            <person name="Ryan E."/>
            <person name="Sun H."/>
            <person name="Florea L."/>
            <person name="Miller W."/>
            <person name="Stoneking T."/>
            <person name="Nhan M."/>
            <person name="Waterston R."/>
            <person name="Wilson R.K."/>
        </authorList>
    </citation>
    <scope>NUCLEOTIDE SEQUENCE [LARGE SCALE GENOMIC DNA]</scope>
    <source>
        <strain>LT2 / SGSC1412 / ATCC 700720</strain>
    </source>
</reference>
<evidence type="ECO:0000250" key="1"/>
<evidence type="ECO:0000255" key="2">
    <source>
        <dbReference type="PROSITE-ProRule" id="PRU00193"/>
    </source>
</evidence>
<evidence type="ECO:0000305" key="3"/>
<gene>
    <name type="primary">fhlA</name>
    <name type="ordered locus">STM2859</name>
</gene>
<proteinExistence type="evidence at protein level"/>
<accession>P0CL46</accession>
<accession>P40734</accession>
<accession>Q9L6U9</accession>
<comment type="function">
    <text evidence="1">Required for induction of expression of the formate dehydrogenase H and hydrogenase-3 structural genes.</text>
</comment>
<name>FHLA_SALTY</name>
<protein>
    <recommendedName>
        <fullName>Formate hydrogenlyase transcriptional activator</fullName>
    </recommendedName>
</protein>
<feature type="chain" id="PRO_0000081298" description="Formate hydrogenlyase transcriptional activator">
    <location>
        <begin position="1"/>
        <end position="692"/>
    </location>
</feature>
<feature type="domain" description="GAF">
    <location>
        <begin position="202"/>
        <end position="344"/>
    </location>
</feature>
<feature type="domain" description="Sigma-54 factor interaction" evidence="2">
    <location>
        <begin position="381"/>
        <end position="610"/>
    </location>
</feature>
<feature type="DNA-binding region" description="H-T-H motif" evidence="1">
    <location>
        <begin position="663"/>
        <end position="682"/>
    </location>
</feature>
<feature type="binding site" evidence="2">
    <location>
        <begin position="409"/>
        <end position="416"/>
    </location>
    <ligand>
        <name>ATP</name>
        <dbReference type="ChEBI" id="CHEBI:30616"/>
    </ligand>
</feature>
<feature type="binding site" evidence="2">
    <location>
        <begin position="472"/>
        <end position="481"/>
    </location>
    <ligand>
        <name>ATP</name>
        <dbReference type="ChEBI" id="CHEBI:30616"/>
    </ligand>
</feature>
<feature type="sequence conflict" description="In Ref. 1; AAF70634." evidence="3" ref="1">
    <original>D</original>
    <variation>A</variation>
    <location>
        <position position="639"/>
    </location>
</feature>
<sequence>MSYTPMSDLGQQGLFDITRTLLQQPDLASLSEALSQLVKRSALADSAGIVLWQAQSQRAQYYATRENGRPVEYEDETVLAHGPVRRILSRPDALHCNFHEFTETWPQLAASGLYPEFGHYCLLPLAAEGRIFGGCEFIRQEDRPWSEKEYDRLHTFTQIVGVVAEQIQNRVNNNVDYDLLCRERDNFRILVAITNAVLSRLDIDELVSEVAKEIHHYFNIDAISIVLRSHRKNKLNIYSTHYLDEHHPAHEQSEVDEAGTLTERVFKSKEMLLINLNERDPLAPYERMLFDTWGNQIQTLCLLPLMSGKTMLGVLKLAQCEEKVFTTANLKLLRQIAERVAIAVDNALAYQEIHRLKERLVDENLALTEQLNNVDSEFGEIIGRSEAMYNVLKQVEMVAQSDSTVLILGETGTGKELIARAIHNLSGRSGRRMVKMNCAAMPAGLLESDLFGHERGAFTGASAQRIGRFELADKSSLFLDEVGDMPLELQPKLLRVLQEQEFERLGSNKLIQTDVRLIAATNRDLKKMVADREFRNDLYYRLNVFPIQLPPLRERPEDIPLLVKAFTFKIARRMGRNIDSIPAETLRTLSSMEWPGNVRELENVVERAVLLTRGNVLQLSLPDITAVTPDTSPVATESDKEGEDEYQLIIRVLKETNGVVAGPKGAAQRLGLKRTTLLSRMKRLGIDKDALA</sequence>
<keyword id="KW-0010">Activator</keyword>
<keyword id="KW-0067">ATP-binding</keyword>
<keyword id="KW-0238">DNA-binding</keyword>
<keyword id="KW-0547">Nucleotide-binding</keyword>
<keyword id="KW-1185">Reference proteome</keyword>
<keyword id="KW-0804">Transcription</keyword>
<keyword id="KW-0805">Transcription regulation</keyword>
<keyword id="KW-0902">Two-component regulatory system</keyword>
<organism>
    <name type="scientific">Salmonella typhimurium (strain LT2 / SGSC1412 / ATCC 700720)</name>
    <dbReference type="NCBI Taxonomy" id="99287"/>
    <lineage>
        <taxon>Bacteria</taxon>
        <taxon>Pseudomonadati</taxon>
        <taxon>Pseudomonadota</taxon>
        <taxon>Gammaproteobacteria</taxon>
        <taxon>Enterobacterales</taxon>
        <taxon>Enterobacteriaceae</taxon>
        <taxon>Salmonella</taxon>
    </lineage>
</organism>
<dbReference type="EMBL" id="AF232733">
    <property type="protein sequence ID" value="AAF70634.1"/>
    <property type="molecule type" value="Genomic_DNA"/>
</dbReference>
<dbReference type="EMBL" id="AE006468">
    <property type="protein sequence ID" value="AAL21739.1"/>
    <property type="molecule type" value="Genomic_DNA"/>
</dbReference>
<dbReference type="RefSeq" id="NP_461780.1">
    <property type="nucleotide sequence ID" value="NC_003197.2"/>
</dbReference>
<dbReference type="SMR" id="P0CL46"/>
<dbReference type="STRING" id="99287.STM2859"/>
<dbReference type="PaxDb" id="99287-STM2859"/>
<dbReference type="GeneID" id="1254382"/>
<dbReference type="KEGG" id="stm:STM2859"/>
<dbReference type="PATRIC" id="fig|99287.12.peg.3015"/>
<dbReference type="HOGENOM" id="CLU_000445_95_0_6"/>
<dbReference type="PhylomeDB" id="P0CL46"/>
<dbReference type="BioCyc" id="SENT99287:STM2859-MONOMER"/>
<dbReference type="Proteomes" id="UP000001014">
    <property type="component" value="Chromosome"/>
</dbReference>
<dbReference type="GO" id="GO:0032993">
    <property type="term" value="C:protein-DNA complex"/>
    <property type="evidence" value="ECO:0000318"/>
    <property type="project" value="GO_Central"/>
</dbReference>
<dbReference type="GO" id="GO:0005524">
    <property type="term" value="F:ATP binding"/>
    <property type="evidence" value="ECO:0007669"/>
    <property type="project" value="UniProtKB-KW"/>
</dbReference>
<dbReference type="GO" id="GO:0016887">
    <property type="term" value="F:ATP hydrolysis activity"/>
    <property type="evidence" value="ECO:0007669"/>
    <property type="project" value="InterPro"/>
</dbReference>
<dbReference type="GO" id="GO:0000987">
    <property type="term" value="F:cis-regulatory region sequence-specific DNA binding"/>
    <property type="evidence" value="ECO:0000318"/>
    <property type="project" value="GO_Central"/>
</dbReference>
<dbReference type="GO" id="GO:0001216">
    <property type="term" value="F:DNA-binding transcription activator activity"/>
    <property type="evidence" value="ECO:0000318"/>
    <property type="project" value="GO_Central"/>
</dbReference>
<dbReference type="GO" id="GO:0000160">
    <property type="term" value="P:phosphorelay signal transduction system"/>
    <property type="evidence" value="ECO:0007669"/>
    <property type="project" value="UniProtKB-KW"/>
</dbReference>
<dbReference type="GO" id="GO:0045893">
    <property type="term" value="P:positive regulation of DNA-templated transcription"/>
    <property type="evidence" value="ECO:0000318"/>
    <property type="project" value="GO_Central"/>
</dbReference>
<dbReference type="CDD" id="cd00009">
    <property type="entry name" value="AAA"/>
    <property type="match status" value="1"/>
</dbReference>
<dbReference type="FunFam" id="1.10.8.60:FF:000014">
    <property type="entry name" value="DNA-binding transcriptional regulator NtrC"/>
    <property type="match status" value="1"/>
</dbReference>
<dbReference type="FunFam" id="3.40.50.300:FF:000006">
    <property type="entry name" value="DNA-binding transcriptional regulator NtrC"/>
    <property type="match status" value="1"/>
</dbReference>
<dbReference type="FunFam" id="3.30.450.40:FF:000024">
    <property type="entry name" value="Formate hydrogenlyase transcriptional activator"/>
    <property type="match status" value="1"/>
</dbReference>
<dbReference type="Gene3D" id="1.10.8.60">
    <property type="match status" value="1"/>
</dbReference>
<dbReference type="Gene3D" id="3.30.450.40">
    <property type="match status" value="2"/>
</dbReference>
<dbReference type="Gene3D" id="1.10.10.60">
    <property type="entry name" value="Homeodomain-like"/>
    <property type="match status" value="1"/>
</dbReference>
<dbReference type="Gene3D" id="3.40.50.300">
    <property type="entry name" value="P-loop containing nucleotide triphosphate hydrolases"/>
    <property type="match status" value="1"/>
</dbReference>
<dbReference type="InterPro" id="IPR003593">
    <property type="entry name" value="AAA+_ATPase"/>
</dbReference>
<dbReference type="InterPro" id="IPR003018">
    <property type="entry name" value="GAF"/>
</dbReference>
<dbReference type="InterPro" id="IPR029016">
    <property type="entry name" value="GAF-like_dom_sf"/>
</dbReference>
<dbReference type="InterPro" id="IPR009057">
    <property type="entry name" value="Homeodomain-like_sf"/>
</dbReference>
<dbReference type="InterPro" id="IPR027417">
    <property type="entry name" value="P-loop_NTPase"/>
</dbReference>
<dbReference type="InterPro" id="IPR002078">
    <property type="entry name" value="Sigma_54_int"/>
</dbReference>
<dbReference type="InterPro" id="IPR025662">
    <property type="entry name" value="Sigma_54_int_dom_ATP-bd_1"/>
</dbReference>
<dbReference type="InterPro" id="IPR025944">
    <property type="entry name" value="Sigma_54_int_dom_CS"/>
</dbReference>
<dbReference type="NCBIfam" id="NF011958">
    <property type="entry name" value="PRK15429.1"/>
    <property type="match status" value="1"/>
</dbReference>
<dbReference type="PANTHER" id="PTHR32071:SF123">
    <property type="entry name" value="DNA-BINDING TRANSCRIPTIONAL ACTIVATOR HYFR-RELATED"/>
    <property type="match status" value="1"/>
</dbReference>
<dbReference type="PANTHER" id="PTHR32071">
    <property type="entry name" value="TRANSCRIPTIONAL REGULATORY PROTEIN"/>
    <property type="match status" value="1"/>
</dbReference>
<dbReference type="Pfam" id="PF01590">
    <property type="entry name" value="GAF"/>
    <property type="match status" value="1"/>
</dbReference>
<dbReference type="Pfam" id="PF00158">
    <property type="entry name" value="Sigma54_activat"/>
    <property type="match status" value="1"/>
</dbReference>
<dbReference type="SMART" id="SM00382">
    <property type="entry name" value="AAA"/>
    <property type="match status" value="1"/>
</dbReference>
<dbReference type="SMART" id="SM00065">
    <property type="entry name" value="GAF"/>
    <property type="match status" value="2"/>
</dbReference>
<dbReference type="SUPFAM" id="SSF55781">
    <property type="entry name" value="GAF domain-like"/>
    <property type="match status" value="2"/>
</dbReference>
<dbReference type="SUPFAM" id="SSF46689">
    <property type="entry name" value="Homeodomain-like"/>
    <property type="match status" value="1"/>
</dbReference>
<dbReference type="SUPFAM" id="SSF52540">
    <property type="entry name" value="P-loop containing nucleoside triphosphate hydrolases"/>
    <property type="match status" value="1"/>
</dbReference>
<dbReference type="PROSITE" id="PS00675">
    <property type="entry name" value="SIGMA54_INTERACT_1"/>
    <property type="match status" value="1"/>
</dbReference>
<dbReference type="PROSITE" id="PS00688">
    <property type="entry name" value="SIGMA54_INTERACT_3"/>
    <property type="match status" value="1"/>
</dbReference>
<dbReference type="PROSITE" id="PS50045">
    <property type="entry name" value="SIGMA54_INTERACT_4"/>
    <property type="match status" value="1"/>
</dbReference>